<feature type="chain" id="PRO_0000280802" description="Ras-related protein Rap-2c">
    <location>
        <begin position="1"/>
        <end position="180"/>
    </location>
</feature>
<feature type="propeptide" id="PRO_0000280803" description="Removed in mature form" evidence="3">
    <location>
        <begin position="181"/>
        <end position="183"/>
    </location>
</feature>
<feature type="short sequence motif" description="Effector region" evidence="4">
    <location>
        <begin position="32"/>
        <end position="40"/>
    </location>
</feature>
<feature type="binding site" evidence="1">
    <location>
        <begin position="10"/>
        <end position="17"/>
    </location>
    <ligand>
        <name>GTP</name>
        <dbReference type="ChEBI" id="CHEBI:37565"/>
    </ligand>
</feature>
<feature type="binding site" evidence="1">
    <location>
        <begin position="57"/>
        <end position="61"/>
    </location>
    <ligand>
        <name>GTP</name>
        <dbReference type="ChEBI" id="CHEBI:37565"/>
    </ligand>
</feature>
<feature type="binding site" evidence="1">
    <location>
        <begin position="116"/>
        <end position="119"/>
    </location>
    <ligand>
        <name>GTP</name>
        <dbReference type="ChEBI" id="CHEBI:37565"/>
    </ligand>
</feature>
<feature type="modified residue" description="Cysteine methyl ester" evidence="3">
    <location>
        <position position="180"/>
    </location>
</feature>
<feature type="lipid moiety-binding region" description="S-palmitoyl cysteine" evidence="3">
    <location>
        <position position="176"/>
    </location>
</feature>
<feature type="lipid moiety-binding region" description="S-palmitoyl cysteine" evidence="3">
    <location>
        <position position="177"/>
    </location>
</feature>
<feature type="lipid moiety-binding region" description="S-geranylgeranyl cysteine" evidence="3">
    <location>
        <position position="180"/>
    </location>
</feature>
<evidence type="ECO:0000250" key="1"/>
<evidence type="ECO:0000250" key="2">
    <source>
        <dbReference type="UniProtKB" id="P10114"/>
    </source>
</evidence>
<evidence type="ECO:0000250" key="3">
    <source>
        <dbReference type="UniProtKB" id="Q8BU31"/>
    </source>
</evidence>
<evidence type="ECO:0000305" key="4"/>
<organism>
    <name type="scientific">Bos taurus</name>
    <name type="common">Bovine</name>
    <dbReference type="NCBI Taxonomy" id="9913"/>
    <lineage>
        <taxon>Eukaryota</taxon>
        <taxon>Metazoa</taxon>
        <taxon>Chordata</taxon>
        <taxon>Craniata</taxon>
        <taxon>Vertebrata</taxon>
        <taxon>Euteleostomi</taxon>
        <taxon>Mammalia</taxon>
        <taxon>Eutheria</taxon>
        <taxon>Laurasiatheria</taxon>
        <taxon>Artiodactyla</taxon>
        <taxon>Ruminantia</taxon>
        <taxon>Pecora</taxon>
        <taxon>Bovidae</taxon>
        <taxon>Bovinae</taxon>
        <taxon>Bos</taxon>
    </lineage>
</organism>
<sequence length="183" mass="20745">MREYKVVVLGSGGVGKSALTVQFVTGTFIEKYDPTIEDFYRKEIEVDSSPSVLEILDTAGTEQFASMRDLYIKNGQGFILVYSLVNQQSFQDIKPMRDQIVRVKRYEKVPLILVGNKVDLEPEREVMSSEGRALAQEWGCPFMETSAKSKSMVDELFAEIVRQMNYSSLPEKQDQCCTTCVVQ</sequence>
<comment type="function">
    <text evidence="1">Small GTP-binding protein which cycles between a GDP-bound inactive and a GTP-bound active form. May play a role in cytoskeletal rearrangements and regulate cell spreading through activation of the effector TNIK. May play a role in SRE-mediated gene transcription (By similarity).</text>
</comment>
<comment type="catalytic activity">
    <reaction evidence="2">
        <text>GTP + H2O = GDP + phosphate + H(+)</text>
        <dbReference type="Rhea" id="RHEA:19669"/>
        <dbReference type="ChEBI" id="CHEBI:15377"/>
        <dbReference type="ChEBI" id="CHEBI:15378"/>
        <dbReference type="ChEBI" id="CHEBI:37565"/>
        <dbReference type="ChEBI" id="CHEBI:43474"/>
        <dbReference type="ChEBI" id="CHEBI:58189"/>
        <dbReference type="EC" id="3.6.5.2"/>
    </reaction>
</comment>
<comment type="subcellular location">
    <subcellularLocation>
        <location evidence="1">Cytoplasm</location>
    </subcellularLocation>
    <subcellularLocation>
        <location evidence="1">Recycling endosome membrane</location>
        <topology evidence="1">Lipid-anchor</topology>
        <orientation evidence="1">Cytoplasmic side</orientation>
    </subcellularLocation>
</comment>
<comment type="PTM">
    <text evidence="3">Palmitoylated. Palmitoylation is required for association with recycling endosome membranes and activation of TNIK.</text>
</comment>
<comment type="similarity">
    <text evidence="4">Belongs to the small GTPase superfamily. Ras family.</text>
</comment>
<proteinExistence type="evidence at transcript level"/>
<protein>
    <recommendedName>
        <fullName>Ras-related protein Rap-2c</fullName>
        <ecNumber evidence="2">3.6.5.2</ecNumber>
    </recommendedName>
</protein>
<name>RAP2C_BOVIN</name>
<gene>
    <name type="primary">RAP2C</name>
</gene>
<keyword id="KW-0963">Cytoplasm</keyword>
<keyword id="KW-0967">Endosome</keyword>
<keyword id="KW-0342">GTP-binding</keyword>
<keyword id="KW-0378">Hydrolase</keyword>
<keyword id="KW-0449">Lipoprotein</keyword>
<keyword id="KW-0472">Membrane</keyword>
<keyword id="KW-0488">Methylation</keyword>
<keyword id="KW-0547">Nucleotide-binding</keyword>
<keyword id="KW-0564">Palmitate</keyword>
<keyword id="KW-0636">Prenylation</keyword>
<keyword id="KW-1185">Reference proteome</keyword>
<dbReference type="EC" id="3.6.5.2" evidence="2"/>
<dbReference type="EMBL" id="BC123730">
    <property type="protein sequence ID" value="AAI23731.1"/>
    <property type="molecule type" value="mRNA"/>
</dbReference>
<dbReference type="RefSeq" id="NP_001069168.1">
    <property type="nucleotide sequence ID" value="NM_001075700.1"/>
</dbReference>
<dbReference type="RefSeq" id="XP_005227569.1">
    <property type="nucleotide sequence ID" value="XM_005227512.5"/>
</dbReference>
<dbReference type="RefSeq" id="XP_005227570.1">
    <property type="nucleotide sequence ID" value="XM_005227513.5"/>
</dbReference>
<dbReference type="RefSeq" id="XP_010819712.1">
    <property type="nucleotide sequence ID" value="XM_010821410.2"/>
</dbReference>
<dbReference type="RefSeq" id="XP_059739367.1">
    <property type="nucleotide sequence ID" value="XM_059883384.1"/>
</dbReference>
<dbReference type="SMR" id="Q08DI5"/>
<dbReference type="FunCoup" id="Q08DI5">
    <property type="interactions" value="1626"/>
</dbReference>
<dbReference type="STRING" id="9913.ENSBTAP00000005408"/>
<dbReference type="PaxDb" id="9913-ENSBTAP00000005408"/>
<dbReference type="Ensembl" id="ENSBTAT00000005408.6">
    <property type="protein sequence ID" value="ENSBTAP00000005408.5"/>
    <property type="gene ID" value="ENSBTAG00000004131.7"/>
</dbReference>
<dbReference type="GeneID" id="515181"/>
<dbReference type="KEGG" id="bta:515181"/>
<dbReference type="CTD" id="57826"/>
<dbReference type="VEuPathDB" id="HostDB:ENSBTAG00000004131"/>
<dbReference type="VGNC" id="VGNC:33721">
    <property type="gene designation" value="RAP2C"/>
</dbReference>
<dbReference type="eggNOG" id="KOG0395">
    <property type="taxonomic scope" value="Eukaryota"/>
</dbReference>
<dbReference type="GeneTree" id="ENSGT00940000157245"/>
<dbReference type="HOGENOM" id="CLU_041217_9_8_1"/>
<dbReference type="InParanoid" id="Q08DI5"/>
<dbReference type="OMA" id="CEFTEAS"/>
<dbReference type="OrthoDB" id="5976022at2759"/>
<dbReference type="TreeFam" id="TF313014"/>
<dbReference type="Reactome" id="R-BTA-6798695">
    <property type="pathway name" value="Neutrophil degranulation"/>
</dbReference>
<dbReference type="Proteomes" id="UP000009136">
    <property type="component" value="Chromosome X"/>
</dbReference>
<dbReference type="Bgee" id="ENSBTAG00000004131">
    <property type="expression patterns" value="Expressed in caput epididymis and 105 other cell types or tissues"/>
</dbReference>
<dbReference type="GO" id="GO:0005923">
    <property type="term" value="C:bicellular tight junction"/>
    <property type="evidence" value="ECO:0007669"/>
    <property type="project" value="Ensembl"/>
</dbReference>
<dbReference type="GO" id="GO:0044291">
    <property type="term" value="C:cell-cell contact zone"/>
    <property type="evidence" value="ECO:0007669"/>
    <property type="project" value="Ensembl"/>
</dbReference>
<dbReference type="GO" id="GO:0005829">
    <property type="term" value="C:cytosol"/>
    <property type="evidence" value="ECO:0007669"/>
    <property type="project" value="Ensembl"/>
</dbReference>
<dbReference type="GO" id="GO:0005886">
    <property type="term" value="C:plasma membrane"/>
    <property type="evidence" value="ECO:0000318"/>
    <property type="project" value="GO_Central"/>
</dbReference>
<dbReference type="GO" id="GO:0055038">
    <property type="term" value="C:recycling endosome membrane"/>
    <property type="evidence" value="ECO:0000250"/>
    <property type="project" value="UniProtKB"/>
</dbReference>
<dbReference type="GO" id="GO:0003925">
    <property type="term" value="F:G protein activity"/>
    <property type="evidence" value="ECO:0007669"/>
    <property type="project" value="UniProtKB-EC"/>
</dbReference>
<dbReference type="GO" id="GO:0019003">
    <property type="term" value="F:GDP binding"/>
    <property type="evidence" value="ECO:0000318"/>
    <property type="project" value="GO_Central"/>
</dbReference>
<dbReference type="GO" id="GO:0005525">
    <property type="term" value="F:GTP binding"/>
    <property type="evidence" value="ECO:0000318"/>
    <property type="project" value="GO_Central"/>
</dbReference>
<dbReference type="GO" id="GO:0003924">
    <property type="term" value="F:GTPase activity"/>
    <property type="evidence" value="ECO:0000318"/>
    <property type="project" value="GO_Central"/>
</dbReference>
<dbReference type="GO" id="GO:0003713">
    <property type="term" value="F:transcription coactivator activity"/>
    <property type="evidence" value="ECO:0007669"/>
    <property type="project" value="Ensembl"/>
</dbReference>
<dbReference type="GO" id="GO:0090557">
    <property type="term" value="P:establishment of endothelial intestinal barrier"/>
    <property type="evidence" value="ECO:0007669"/>
    <property type="project" value="Ensembl"/>
</dbReference>
<dbReference type="GO" id="GO:0030336">
    <property type="term" value="P:negative regulation of cell migration"/>
    <property type="evidence" value="ECO:0000250"/>
    <property type="project" value="UniProtKB"/>
</dbReference>
<dbReference type="GO" id="GO:0032486">
    <property type="term" value="P:Rap protein signal transduction"/>
    <property type="evidence" value="ECO:0000250"/>
    <property type="project" value="UniProtKB"/>
</dbReference>
<dbReference type="GO" id="GO:0061097">
    <property type="term" value="P:regulation of protein tyrosine kinase activity"/>
    <property type="evidence" value="ECO:0000250"/>
    <property type="project" value="UniProtKB"/>
</dbReference>
<dbReference type="CDD" id="cd04176">
    <property type="entry name" value="Rap2"/>
    <property type="match status" value="1"/>
</dbReference>
<dbReference type="FunFam" id="3.40.50.300:FF:000189">
    <property type="entry name" value="Member of ras oncogene family"/>
    <property type="match status" value="1"/>
</dbReference>
<dbReference type="Gene3D" id="3.40.50.300">
    <property type="entry name" value="P-loop containing nucleotide triphosphate hydrolases"/>
    <property type="match status" value="1"/>
</dbReference>
<dbReference type="InterPro" id="IPR027417">
    <property type="entry name" value="P-loop_NTPase"/>
</dbReference>
<dbReference type="InterPro" id="IPR041840">
    <property type="entry name" value="Rap2"/>
</dbReference>
<dbReference type="InterPro" id="IPR005225">
    <property type="entry name" value="Small_GTP-bd"/>
</dbReference>
<dbReference type="InterPro" id="IPR001806">
    <property type="entry name" value="Small_GTPase"/>
</dbReference>
<dbReference type="InterPro" id="IPR020849">
    <property type="entry name" value="Small_GTPase_Ras-type"/>
</dbReference>
<dbReference type="NCBIfam" id="TIGR00231">
    <property type="entry name" value="small_GTP"/>
    <property type="match status" value="1"/>
</dbReference>
<dbReference type="PANTHER" id="PTHR24070">
    <property type="entry name" value="RAS, DI-RAS, AND RHEB FAMILY MEMBERS OF SMALL GTPASE SUPERFAMILY"/>
    <property type="match status" value="1"/>
</dbReference>
<dbReference type="Pfam" id="PF00071">
    <property type="entry name" value="Ras"/>
    <property type="match status" value="1"/>
</dbReference>
<dbReference type="PRINTS" id="PR00449">
    <property type="entry name" value="RASTRNSFRMNG"/>
</dbReference>
<dbReference type="SMART" id="SM00175">
    <property type="entry name" value="RAB"/>
    <property type="match status" value="1"/>
</dbReference>
<dbReference type="SMART" id="SM00173">
    <property type="entry name" value="RAS"/>
    <property type="match status" value="1"/>
</dbReference>
<dbReference type="SMART" id="SM00174">
    <property type="entry name" value="RHO"/>
    <property type="match status" value="1"/>
</dbReference>
<dbReference type="SUPFAM" id="SSF52540">
    <property type="entry name" value="P-loop containing nucleoside triphosphate hydrolases"/>
    <property type="match status" value="1"/>
</dbReference>
<dbReference type="PROSITE" id="PS51421">
    <property type="entry name" value="RAS"/>
    <property type="match status" value="1"/>
</dbReference>
<accession>Q08DI5</accession>
<reference key="1">
    <citation type="submission" date="2006-09" db="EMBL/GenBank/DDBJ databases">
        <authorList>
            <consortium name="NIH - Mammalian Gene Collection (MGC) project"/>
        </authorList>
    </citation>
    <scope>NUCLEOTIDE SEQUENCE [LARGE SCALE MRNA]</scope>
    <source>
        <strain>Hereford</strain>
        <tissue>Fetal muscle</tissue>
    </source>
</reference>